<name>NTPP_RICRO</name>
<keyword id="KW-0963">Cytoplasm</keyword>
<keyword id="KW-0378">Hydrolase</keyword>
<keyword id="KW-0546">Nucleotide metabolism</keyword>
<comment type="function">
    <text evidence="1">Nucleoside triphosphate pyrophosphatase. May have a dual role in cell division arrest and in preventing the incorporation of modified nucleotides into cellular nucleic acids.</text>
</comment>
<comment type="catalytic activity">
    <reaction evidence="1">
        <text>a ribonucleoside 5'-triphosphate + H2O = a ribonucleoside 5'-phosphate + diphosphate + H(+)</text>
        <dbReference type="Rhea" id="RHEA:23996"/>
        <dbReference type="ChEBI" id="CHEBI:15377"/>
        <dbReference type="ChEBI" id="CHEBI:15378"/>
        <dbReference type="ChEBI" id="CHEBI:33019"/>
        <dbReference type="ChEBI" id="CHEBI:58043"/>
        <dbReference type="ChEBI" id="CHEBI:61557"/>
        <dbReference type="EC" id="3.6.1.9"/>
    </reaction>
</comment>
<comment type="catalytic activity">
    <reaction evidence="1">
        <text>a 2'-deoxyribonucleoside 5'-triphosphate + H2O = a 2'-deoxyribonucleoside 5'-phosphate + diphosphate + H(+)</text>
        <dbReference type="Rhea" id="RHEA:44644"/>
        <dbReference type="ChEBI" id="CHEBI:15377"/>
        <dbReference type="ChEBI" id="CHEBI:15378"/>
        <dbReference type="ChEBI" id="CHEBI:33019"/>
        <dbReference type="ChEBI" id="CHEBI:61560"/>
        <dbReference type="ChEBI" id="CHEBI:65317"/>
        <dbReference type="EC" id="3.6.1.9"/>
    </reaction>
</comment>
<comment type="cofactor">
    <cofactor evidence="1">
        <name>a divalent metal cation</name>
        <dbReference type="ChEBI" id="CHEBI:60240"/>
    </cofactor>
</comment>
<comment type="subcellular location">
    <subcellularLocation>
        <location evidence="1">Cytoplasm</location>
    </subcellularLocation>
</comment>
<comment type="similarity">
    <text evidence="1">Belongs to the Maf family.</text>
</comment>
<feature type="chain" id="PRO_1000081720" description="Nucleoside triphosphate pyrophosphatase">
    <location>
        <begin position="1"/>
        <end position="215"/>
    </location>
</feature>
<feature type="active site" description="Proton acceptor" evidence="1">
    <location>
        <position position="77"/>
    </location>
</feature>
<organism>
    <name type="scientific">Rickettsia rickettsii (strain Iowa)</name>
    <dbReference type="NCBI Taxonomy" id="452659"/>
    <lineage>
        <taxon>Bacteria</taxon>
        <taxon>Pseudomonadati</taxon>
        <taxon>Pseudomonadota</taxon>
        <taxon>Alphaproteobacteria</taxon>
        <taxon>Rickettsiales</taxon>
        <taxon>Rickettsiaceae</taxon>
        <taxon>Rickettsieae</taxon>
        <taxon>Rickettsia</taxon>
        <taxon>spotted fever group</taxon>
    </lineage>
</organism>
<reference key="1">
    <citation type="journal article" date="2008" name="Infect. Immun.">
        <title>Genomic comparison of virulent Rickettsia rickettsii Sheila Smith and avirulent Rickettsia rickettsii Iowa.</title>
        <authorList>
            <person name="Ellison D.W."/>
            <person name="Clark T.R."/>
            <person name="Sturdevant D.E."/>
            <person name="Virtaneva K."/>
            <person name="Porcella S.F."/>
            <person name="Hackstadt T."/>
        </authorList>
    </citation>
    <scope>NUCLEOTIDE SEQUENCE [LARGE SCALE GENOMIC DNA]</scope>
    <source>
        <strain>Iowa</strain>
    </source>
</reference>
<proteinExistence type="inferred from homology"/>
<sequence length="215" mass="23808">MKQNRKNLPIILASSSPARIELLNRIKIIPSQIIPADIDETPNLRELPAPLAIRLAYEKAIKIASQIEESAIIIAADTVAAVGRRILPKATTYEEVKNCIKMLSGRRHRVYTGLCIIKKENDQLTVRQKIVQTIVKFKKLSDEEINFYCSLDEGIDKAGGCKISGYAEAFISFISGSYSNVMGLPLFETVNALTSLGFRCSSIMPAKMNYCHSAT</sequence>
<accession>B0BVE4</accession>
<gene>
    <name type="ordered locus">RrIowa_1484</name>
</gene>
<evidence type="ECO:0000255" key="1">
    <source>
        <dbReference type="HAMAP-Rule" id="MF_00528"/>
    </source>
</evidence>
<protein>
    <recommendedName>
        <fullName evidence="1">Nucleoside triphosphate pyrophosphatase</fullName>
        <ecNumber evidence="1">3.6.1.9</ecNumber>
    </recommendedName>
    <alternativeName>
        <fullName evidence="1">Nucleotide pyrophosphatase</fullName>
        <shortName evidence="1">Nucleotide PPase</shortName>
    </alternativeName>
</protein>
<dbReference type="EC" id="3.6.1.9" evidence="1"/>
<dbReference type="EMBL" id="CP000766">
    <property type="protein sequence ID" value="ABY73204.1"/>
    <property type="molecule type" value="Genomic_DNA"/>
</dbReference>
<dbReference type="RefSeq" id="WP_012151371.1">
    <property type="nucleotide sequence ID" value="NC_010263.3"/>
</dbReference>
<dbReference type="SMR" id="B0BVE4"/>
<dbReference type="KEGG" id="rrj:RrIowa_1484"/>
<dbReference type="eggNOG" id="COG0424">
    <property type="taxonomic scope" value="Bacteria"/>
</dbReference>
<dbReference type="HOGENOM" id="CLU_040416_2_0_5"/>
<dbReference type="Proteomes" id="UP000000796">
    <property type="component" value="Chromosome"/>
</dbReference>
<dbReference type="GO" id="GO:0005737">
    <property type="term" value="C:cytoplasm"/>
    <property type="evidence" value="ECO:0007669"/>
    <property type="project" value="UniProtKB-SubCell"/>
</dbReference>
<dbReference type="GO" id="GO:0047429">
    <property type="term" value="F:nucleoside triphosphate diphosphatase activity"/>
    <property type="evidence" value="ECO:0007669"/>
    <property type="project" value="UniProtKB-EC"/>
</dbReference>
<dbReference type="GO" id="GO:0009117">
    <property type="term" value="P:nucleotide metabolic process"/>
    <property type="evidence" value="ECO:0007669"/>
    <property type="project" value="UniProtKB-KW"/>
</dbReference>
<dbReference type="CDD" id="cd00555">
    <property type="entry name" value="Maf"/>
    <property type="match status" value="1"/>
</dbReference>
<dbReference type="Gene3D" id="3.90.950.10">
    <property type="match status" value="1"/>
</dbReference>
<dbReference type="HAMAP" id="MF_00528">
    <property type="entry name" value="Maf"/>
    <property type="match status" value="1"/>
</dbReference>
<dbReference type="InterPro" id="IPR029001">
    <property type="entry name" value="ITPase-like_fam"/>
</dbReference>
<dbReference type="InterPro" id="IPR003697">
    <property type="entry name" value="Maf-like"/>
</dbReference>
<dbReference type="NCBIfam" id="TIGR00172">
    <property type="entry name" value="maf"/>
    <property type="match status" value="1"/>
</dbReference>
<dbReference type="PANTHER" id="PTHR43213">
    <property type="entry name" value="BIFUNCTIONAL DTTP/UTP PYROPHOSPHATASE/METHYLTRANSFERASE PROTEIN-RELATED"/>
    <property type="match status" value="1"/>
</dbReference>
<dbReference type="PANTHER" id="PTHR43213:SF5">
    <property type="entry name" value="BIFUNCTIONAL DTTP_UTP PYROPHOSPHATASE_METHYLTRANSFERASE PROTEIN-RELATED"/>
    <property type="match status" value="1"/>
</dbReference>
<dbReference type="Pfam" id="PF02545">
    <property type="entry name" value="Maf"/>
    <property type="match status" value="1"/>
</dbReference>
<dbReference type="PIRSF" id="PIRSF006305">
    <property type="entry name" value="Maf"/>
    <property type="match status" value="1"/>
</dbReference>
<dbReference type="SUPFAM" id="SSF52972">
    <property type="entry name" value="ITPase-like"/>
    <property type="match status" value="1"/>
</dbReference>